<comment type="function">
    <text evidence="1">Participates in the folding of proteins containing disulfide bonds, may be involved in glycosylation, prolyl hydroxylation and triglyceride transfer.</text>
</comment>
<comment type="catalytic activity">
    <reaction>
        <text>Catalyzes the rearrangement of -S-S- bonds in proteins.</text>
        <dbReference type="EC" id="5.3.4.1"/>
    </reaction>
</comment>
<comment type="similarity">
    <text evidence="4">Belongs to the protein disulfide isomerase family.</text>
</comment>
<dbReference type="EC" id="5.3.4.1"/>
<dbReference type="EMBL" id="DQ104736">
    <property type="protein sequence ID" value="AAZ13768.1"/>
    <property type="molecule type" value="Genomic_DNA"/>
</dbReference>
<dbReference type="EMBL" id="CU329670">
    <property type="protein sequence ID" value="CAB11223.1"/>
    <property type="molecule type" value="Genomic_DNA"/>
</dbReference>
<dbReference type="PIR" id="T37880">
    <property type="entry name" value="T37880"/>
</dbReference>
<dbReference type="SMR" id="O13811"/>
<dbReference type="BioGRID" id="278739">
    <property type="interactions" value="7"/>
</dbReference>
<dbReference type="FunCoup" id="O13811">
    <property type="interactions" value="242"/>
</dbReference>
<dbReference type="STRING" id="284812.O13811"/>
<dbReference type="iPTMnet" id="O13811"/>
<dbReference type="PaxDb" id="4896-SPAC17H9.14c.1"/>
<dbReference type="EnsemblFungi" id="SPAC17H9.14c.1">
    <property type="protein sequence ID" value="SPAC17H9.14c.1:pep"/>
    <property type="gene ID" value="SPAC17H9.14c"/>
</dbReference>
<dbReference type="KEGG" id="spo:2542270"/>
<dbReference type="PomBase" id="SPAC17H9.14c"/>
<dbReference type="VEuPathDB" id="FungiDB:SPAC17H9.14c"/>
<dbReference type="eggNOG" id="KOG0191">
    <property type="taxonomic scope" value="Eukaryota"/>
</dbReference>
<dbReference type="HOGENOM" id="CLU_038617_1_1_1"/>
<dbReference type="InParanoid" id="O13811"/>
<dbReference type="OMA" id="FINEHAG"/>
<dbReference type="PhylomeDB" id="O13811"/>
<dbReference type="BRENDA" id="5.3.4.1">
    <property type="organism ID" value="5613"/>
</dbReference>
<dbReference type="PRO" id="PR:O13811"/>
<dbReference type="Proteomes" id="UP000002485">
    <property type="component" value="Chromosome I"/>
</dbReference>
<dbReference type="GO" id="GO:0005783">
    <property type="term" value="C:endoplasmic reticulum"/>
    <property type="evidence" value="ECO:0000314"/>
    <property type="project" value="PomBase"/>
</dbReference>
<dbReference type="GO" id="GO:0003756">
    <property type="term" value="F:protein disulfide isomerase activity"/>
    <property type="evidence" value="ECO:0000315"/>
    <property type="project" value="PomBase"/>
</dbReference>
<dbReference type="GO" id="GO:0015035">
    <property type="term" value="F:protein-disulfide reductase activity"/>
    <property type="evidence" value="ECO:0000315"/>
    <property type="project" value="PomBase"/>
</dbReference>
<dbReference type="GO" id="GO:0034599">
    <property type="term" value="P:cellular response to oxidative stress"/>
    <property type="evidence" value="ECO:0000315"/>
    <property type="project" value="PomBase"/>
</dbReference>
<dbReference type="GO" id="GO:0006457">
    <property type="term" value="P:protein folding"/>
    <property type="evidence" value="ECO:0000315"/>
    <property type="project" value="PomBase"/>
</dbReference>
<dbReference type="GO" id="GO:0034975">
    <property type="term" value="P:protein folding in endoplasmic reticulum"/>
    <property type="evidence" value="ECO:0000305"/>
    <property type="project" value="PomBase"/>
</dbReference>
<dbReference type="CDD" id="cd00238">
    <property type="entry name" value="ERp29c"/>
    <property type="match status" value="1"/>
</dbReference>
<dbReference type="CDD" id="cd02998">
    <property type="entry name" value="PDI_a_ERp38"/>
    <property type="match status" value="2"/>
</dbReference>
<dbReference type="FunFam" id="3.40.30.10:FF:000032">
    <property type="entry name" value="Protein disulfide-isomerase A6 homolog"/>
    <property type="match status" value="1"/>
</dbReference>
<dbReference type="Gene3D" id="1.20.1150.12">
    <property type="entry name" value="Endoplasmic reticulum resident protein 29, C-terminal domain"/>
    <property type="match status" value="1"/>
</dbReference>
<dbReference type="Gene3D" id="3.40.30.10">
    <property type="entry name" value="Glutaredoxin"/>
    <property type="match status" value="2"/>
</dbReference>
<dbReference type="InterPro" id="IPR011679">
    <property type="entry name" value="ERp29_C"/>
</dbReference>
<dbReference type="InterPro" id="IPR036356">
    <property type="entry name" value="ERp29_C_sf"/>
</dbReference>
<dbReference type="InterPro" id="IPR051063">
    <property type="entry name" value="PDI"/>
</dbReference>
<dbReference type="InterPro" id="IPR005788">
    <property type="entry name" value="PDI_thioredoxin-like_dom"/>
</dbReference>
<dbReference type="InterPro" id="IPR036249">
    <property type="entry name" value="Thioredoxin-like_sf"/>
</dbReference>
<dbReference type="InterPro" id="IPR017937">
    <property type="entry name" value="Thioredoxin_CS"/>
</dbReference>
<dbReference type="InterPro" id="IPR013766">
    <property type="entry name" value="Thioredoxin_domain"/>
</dbReference>
<dbReference type="NCBIfam" id="TIGR01126">
    <property type="entry name" value="pdi_dom"/>
    <property type="match status" value="2"/>
</dbReference>
<dbReference type="PANTHER" id="PTHR45672:SF11">
    <property type="entry name" value="PROTEIN DISULFIDE-ISOMERASE C17H9.14C"/>
    <property type="match status" value="1"/>
</dbReference>
<dbReference type="PANTHER" id="PTHR45672">
    <property type="entry name" value="PROTEIN DISULFIDE-ISOMERASE C17H9.14C-RELATED"/>
    <property type="match status" value="1"/>
</dbReference>
<dbReference type="Pfam" id="PF07749">
    <property type="entry name" value="ERp29"/>
    <property type="match status" value="1"/>
</dbReference>
<dbReference type="Pfam" id="PF00085">
    <property type="entry name" value="Thioredoxin"/>
    <property type="match status" value="2"/>
</dbReference>
<dbReference type="PRINTS" id="PR00421">
    <property type="entry name" value="THIOREDOXIN"/>
</dbReference>
<dbReference type="SUPFAM" id="SSF47933">
    <property type="entry name" value="ERP29 C domain-like"/>
    <property type="match status" value="1"/>
</dbReference>
<dbReference type="SUPFAM" id="SSF52833">
    <property type="entry name" value="Thioredoxin-like"/>
    <property type="match status" value="2"/>
</dbReference>
<dbReference type="PROSITE" id="PS00194">
    <property type="entry name" value="THIOREDOXIN_1"/>
    <property type="match status" value="2"/>
</dbReference>
<dbReference type="PROSITE" id="PS51352">
    <property type="entry name" value="THIOREDOXIN_2"/>
    <property type="match status" value="2"/>
</dbReference>
<proteinExistence type="inferred from homology"/>
<feature type="signal peptide" evidence="2">
    <location>
        <begin position="1"/>
        <end position="19"/>
    </location>
</feature>
<feature type="chain" id="PRO_0000034217" description="Protein disulfide-isomerase C17H9.14c">
    <location>
        <begin position="20"/>
        <end position="359"/>
    </location>
</feature>
<feature type="domain" description="Thioredoxin 1" evidence="3">
    <location>
        <begin position="20"/>
        <end position="130"/>
    </location>
</feature>
<feature type="domain" description="Thioredoxin 2" evidence="3">
    <location>
        <begin position="134"/>
        <end position="250"/>
    </location>
</feature>
<feature type="active site" description="Nucleophile" evidence="1">
    <location>
        <position position="51"/>
    </location>
</feature>
<feature type="active site" description="Nucleophile" evidence="1">
    <location>
        <position position="54"/>
    </location>
</feature>
<feature type="site" description="Contributes to redox potential value" evidence="1">
    <location>
        <position position="52"/>
    </location>
</feature>
<feature type="site" description="Contributes to redox potential value" evidence="1">
    <location>
        <position position="53"/>
    </location>
</feature>
<feature type="site" description="Lowers pKa of C-terminal Cys of first active site" evidence="1">
    <location>
        <position position="116"/>
    </location>
</feature>
<feature type="disulfide bond" description="Redox-active" evidence="3">
    <location>
        <begin position="51"/>
        <end position="54"/>
    </location>
</feature>
<feature type="disulfide bond" description="Redox-active" evidence="3">
    <location>
        <begin position="170"/>
        <end position="173"/>
    </location>
</feature>
<accession>O13811</accession>
<accession>Q4F7X2</accession>
<organism>
    <name type="scientific">Schizosaccharomyces pombe (strain 972 / ATCC 24843)</name>
    <name type="common">Fission yeast</name>
    <dbReference type="NCBI Taxonomy" id="284812"/>
    <lineage>
        <taxon>Eukaryota</taxon>
        <taxon>Fungi</taxon>
        <taxon>Dikarya</taxon>
        <taxon>Ascomycota</taxon>
        <taxon>Taphrinomycotina</taxon>
        <taxon>Schizosaccharomycetes</taxon>
        <taxon>Schizosaccharomycetales</taxon>
        <taxon>Schizosaccharomycetaceae</taxon>
        <taxon>Schizosaccharomyces</taxon>
    </lineage>
</organism>
<gene>
    <name type="ORF">SPAC17H9.14c</name>
</gene>
<reference key="1">
    <citation type="submission" date="2005-06" db="EMBL/GenBank/DDBJ databases">
        <title>Physiological roles and regulation of protein disulfide isomerase in the fission yeast Schizosaccharomyces pombe.</title>
        <authorList>
            <person name="Choi Y.-S."/>
            <person name="Kim H.-G."/>
            <person name="Lim H.-W."/>
            <person name="Lim C.-J."/>
        </authorList>
    </citation>
    <scope>NUCLEOTIDE SEQUENCE [GENOMIC DNA]</scope>
</reference>
<reference key="2">
    <citation type="journal article" date="2002" name="Nature">
        <title>The genome sequence of Schizosaccharomyces pombe.</title>
        <authorList>
            <person name="Wood V."/>
            <person name="Gwilliam R."/>
            <person name="Rajandream M.A."/>
            <person name="Lyne M.H."/>
            <person name="Lyne R."/>
            <person name="Stewart A."/>
            <person name="Sgouros J.G."/>
            <person name="Peat N."/>
            <person name="Hayles J."/>
            <person name="Baker S.G."/>
            <person name="Basham D."/>
            <person name="Bowman S."/>
            <person name="Brooks K."/>
            <person name="Brown D."/>
            <person name="Brown S."/>
            <person name="Chillingworth T."/>
            <person name="Churcher C.M."/>
            <person name="Collins M."/>
            <person name="Connor R."/>
            <person name="Cronin A."/>
            <person name="Davis P."/>
            <person name="Feltwell T."/>
            <person name="Fraser A."/>
            <person name="Gentles S."/>
            <person name="Goble A."/>
            <person name="Hamlin N."/>
            <person name="Harris D.E."/>
            <person name="Hidalgo J."/>
            <person name="Hodgson G."/>
            <person name="Holroyd S."/>
            <person name="Hornsby T."/>
            <person name="Howarth S."/>
            <person name="Huckle E.J."/>
            <person name="Hunt S."/>
            <person name="Jagels K."/>
            <person name="James K.D."/>
            <person name="Jones L."/>
            <person name="Jones M."/>
            <person name="Leather S."/>
            <person name="McDonald S."/>
            <person name="McLean J."/>
            <person name="Mooney P."/>
            <person name="Moule S."/>
            <person name="Mungall K.L."/>
            <person name="Murphy L.D."/>
            <person name="Niblett D."/>
            <person name="Odell C."/>
            <person name="Oliver K."/>
            <person name="O'Neil S."/>
            <person name="Pearson D."/>
            <person name="Quail M.A."/>
            <person name="Rabbinowitsch E."/>
            <person name="Rutherford K.M."/>
            <person name="Rutter S."/>
            <person name="Saunders D."/>
            <person name="Seeger K."/>
            <person name="Sharp S."/>
            <person name="Skelton J."/>
            <person name="Simmonds M.N."/>
            <person name="Squares R."/>
            <person name="Squares S."/>
            <person name="Stevens K."/>
            <person name="Taylor K."/>
            <person name="Taylor R.G."/>
            <person name="Tivey A."/>
            <person name="Walsh S.V."/>
            <person name="Warren T."/>
            <person name="Whitehead S."/>
            <person name="Woodward J.R."/>
            <person name="Volckaert G."/>
            <person name="Aert R."/>
            <person name="Robben J."/>
            <person name="Grymonprez B."/>
            <person name="Weltjens I."/>
            <person name="Vanstreels E."/>
            <person name="Rieger M."/>
            <person name="Schaefer M."/>
            <person name="Mueller-Auer S."/>
            <person name="Gabel C."/>
            <person name="Fuchs M."/>
            <person name="Duesterhoeft A."/>
            <person name="Fritzc C."/>
            <person name="Holzer E."/>
            <person name="Moestl D."/>
            <person name="Hilbert H."/>
            <person name="Borzym K."/>
            <person name="Langer I."/>
            <person name="Beck A."/>
            <person name="Lehrach H."/>
            <person name="Reinhardt R."/>
            <person name="Pohl T.M."/>
            <person name="Eger P."/>
            <person name="Zimmermann W."/>
            <person name="Wedler H."/>
            <person name="Wambutt R."/>
            <person name="Purnelle B."/>
            <person name="Goffeau A."/>
            <person name="Cadieu E."/>
            <person name="Dreano S."/>
            <person name="Gloux S."/>
            <person name="Lelaure V."/>
            <person name="Mottier S."/>
            <person name="Galibert F."/>
            <person name="Aves S.J."/>
            <person name="Xiang Z."/>
            <person name="Hunt C."/>
            <person name="Moore K."/>
            <person name="Hurst S.M."/>
            <person name="Lucas M."/>
            <person name="Rochet M."/>
            <person name="Gaillardin C."/>
            <person name="Tallada V.A."/>
            <person name="Garzon A."/>
            <person name="Thode G."/>
            <person name="Daga R.R."/>
            <person name="Cruzado L."/>
            <person name="Jimenez J."/>
            <person name="Sanchez M."/>
            <person name="del Rey F."/>
            <person name="Benito J."/>
            <person name="Dominguez A."/>
            <person name="Revuelta J.L."/>
            <person name="Moreno S."/>
            <person name="Armstrong J."/>
            <person name="Forsburg S.L."/>
            <person name="Cerutti L."/>
            <person name="Lowe T."/>
            <person name="McCombie W.R."/>
            <person name="Paulsen I."/>
            <person name="Potashkin J."/>
            <person name="Shpakovski G.V."/>
            <person name="Ussery D."/>
            <person name="Barrell B.G."/>
            <person name="Nurse P."/>
        </authorList>
    </citation>
    <scope>NUCLEOTIDE SEQUENCE [LARGE SCALE GENOMIC DNA]</scope>
    <source>
        <strain>972 / ATCC 24843</strain>
    </source>
</reference>
<name>PDI2_SCHPO</name>
<evidence type="ECO:0000250" key="1"/>
<evidence type="ECO:0000255" key="2"/>
<evidence type="ECO:0000255" key="3">
    <source>
        <dbReference type="PROSITE-ProRule" id="PRU00691"/>
    </source>
</evidence>
<evidence type="ECO:0000305" key="4"/>
<protein>
    <recommendedName>
        <fullName>Protein disulfide-isomerase C17H9.14c</fullName>
        <ecNumber>5.3.4.1</ecNumber>
    </recommendedName>
</protein>
<keyword id="KW-1015">Disulfide bond</keyword>
<keyword id="KW-0413">Isomerase</keyword>
<keyword id="KW-0676">Redox-active center</keyword>
<keyword id="KW-1185">Reference proteome</keyword>
<keyword id="KW-0677">Repeat</keyword>
<keyword id="KW-0732">Signal</keyword>
<sequence length="359" mass="40692">MRLPLLSFVIFALFALVFASGVVELQSLNELENTIRASKKGALIEFYATWCGHCKSLAPVYEELGALFEDHNDVLIGKIDADTHSDVADKYHITGFPTLIWFPPDGSEPVQYSNARDVDSLTQFVSEKTGIKKRKIVLPSNVVELDSLNFDKVVMDDKKDVLVEFYADWCGYCKRLAPTYETLGKVFKNEPNVEIVKINADVFADIGRLHEVASFPTIKFFPKDDKDKPELYEGDRSLESLIEYINKKSGTQRSPDGTLLSTAGRIPTFDEFAAEFLDMSNAAKEVVLEKVKQLALEDSSRWTKYYKKVFEKILNDENWVHKEAKRLSKLLRQKSIALASADDFKTRLNILNSFLPGNH</sequence>